<protein>
    <recommendedName>
        <fullName evidence="1">Isoleucine--tRNA ligase</fullName>
        <ecNumber evidence="1">6.1.1.5</ecNumber>
    </recommendedName>
    <alternativeName>
        <fullName evidence="1">Isoleucyl-tRNA synthetase</fullName>
        <shortName evidence="1">IleRS</shortName>
    </alternativeName>
</protein>
<gene>
    <name evidence="1" type="primary">ileS</name>
    <name type="ordered locus">NP_0610A</name>
</gene>
<organism>
    <name type="scientific">Natronomonas pharaonis (strain ATCC 35678 / DSM 2160 / CIP 103997 / JCM 8858 / NBRC 14720 / NCIMB 2260 / Gabara)</name>
    <name type="common">Halobacterium pharaonis</name>
    <dbReference type="NCBI Taxonomy" id="348780"/>
    <lineage>
        <taxon>Archaea</taxon>
        <taxon>Methanobacteriati</taxon>
        <taxon>Methanobacteriota</taxon>
        <taxon>Stenosarchaea group</taxon>
        <taxon>Halobacteria</taxon>
        <taxon>Halobacteriales</taxon>
        <taxon>Haloarculaceae</taxon>
        <taxon>Natronomonas</taxon>
    </lineage>
</organism>
<dbReference type="EC" id="6.1.1.5" evidence="1"/>
<dbReference type="EMBL" id="CR936257">
    <property type="protein sequence ID" value="CAI48396.1"/>
    <property type="molecule type" value="Genomic_DNA"/>
</dbReference>
<dbReference type="RefSeq" id="WP_011322032.1">
    <property type="nucleotide sequence ID" value="NC_007426.1"/>
</dbReference>
<dbReference type="SMR" id="Q3ITY7"/>
<dbReference type="STRING" id="348780.NP_0610A"/>
<dbReference type="EnsemblBacteria" id="CAI48396">
    <property type="protein sequence ID" value="CAI48396"/>
    <property type="gene ID" value="NP_0610A"/>
</dbReference>
<dbReference type="GeneID" id="3702863"/>
<dbReference type="KEGG" id="nph:NP_0610A"/>
<dbReference type="eggNOG" id="arCOG00807">
    <property type="taxonomic scope" value="Archaea"/>
</dbReference>
<dbReference type="HOGENOM" id="CLU_001493_1_1_2"/>
<dbReference type="OrthoDB" id="30823at2157"/>
<dbReference type="Proteomes" id="UP000002698">
    <property type="component" value="Chromosome"/>
</dbReference>
<dbReference type="GO" id="GO:0005737">
    <property type="term" value="C:cytoplasm"/>
    <property type="evidence" value="ECO:0007669"/>
    <property type="project" value="UniProtKB-SubCell"/>
</dbReference>
<dbReference type="GO" id="GO:0002161">
    <property type="term" value="F:aminoacyl-tRNA deacylase activity"/>
    <property type="evidence" value="ECO:0007669"/>
    <property type="project" value="InterPro"/>
</dbReference>
<dbReference type="GO" id="GO:0005524">
    <property type="term" value="F:ATP binding"/>
    <property type="evidence" value="ECO:0007669"/>
    <property type="project" value="UniProtKB-UniRule"/>
</dbReference>
<dbReference type="GO" id="GO:0004822">
    <property type="term" value="F:isoleucine-tRNA ligase activity"/>
    <property type="evidence" value="ECO:0007669"/>
    <property type="project" value="UniProtKB-UniRule"/>
</dbReference>
<dbReference type="GO" id="GO:0000049">
    <property type="term" value="F:tRNA binding"/>
    <property type="evidence" value="ECO:0007669"/>
    <property type="project" value="InterPro"/>
</dbReference>
<dbReference type="GO" id="GO:0008270">
    <property type="term" value="F:zinc ion binding"/>
    <property type="evidence" value="ECO:0007669"/>
    <property type="project" value="UniProtKB-UniRule"/>
</dbReference>
<dbReference type="GO" id="GO:0006428">
    <property type="term" value="P:isoleucyl-tRNA aminoacylation"/>
    <property type="evidence" value="ECO:0007669"/>
    <property type="project" value="UniProtKB-UniRule"/>
</dbReference>
<dbReference type="CDD" id="cd07961">
    <property type="entry name" value="Anticodon_Ia_Ile_ABEc"/>
    <property type="match status" value="1"/>
</dbReference>
<dbReference type="FunFam" id="3.40.50.620:FF:000286">
    <property type="entry name" value="Isoleucine--tRNA ligase"/>
    <property type="match status" value="1"/>
</dbReference>
<dbReference type="Gene3D" id="3.40.50.620">
    <property type="entry name" value="HUPs"/>
    <property type="match status" value="2"/>
</dbReference>
<dbReference type="Gene3D" id="1.10.730.10">
    <property type="entry name" value="Isoleucyl-tRNA Synthetase, Domain 1"/>
    <property type="match status" value="1"/>
</dbReference>
<dbReference type="Gene3D" id="3.90.740.10">
    <property type="entry name" value="Valyl/Leucyl/Isoleucyl-tRNA synthetase, editing domain"/>
    <property type="match status" value="1"/>
</dbReference>
<dbReference type="HAMAP" id="MF_02003">
    <property type="entry name" value="Ile_tRNA_synth_type2"/>
    <property type="match status" value="1"/>
</dbReference>
<dbReference type="InterPro" id="IPR002300">
    <property type="entry name" value="aa-tRNA-synth_Ia"/>
</dbReference>
<dbReference type="InterPro" id="IPR033709">
    <property type="entry name" value="Anticodon_Ile_ABEc"/>
</dbReference>
<dbReference type="InterPro" id="IPR002301">
    <property type="entry name" value="Ile-tRNA-ligase"/>
</dbReference>
<dbReference type="InterPro" id="IPR023586">
    <property type="entry name" value="Ile-tRNA-ligase_type2"/>
</dbReference>
<dbReference type="InterPro" id="IPR013155">
    <property type="entry name" value="M/V/L/I-tRNA-synth_anticd-bd"/>
</dbReference>
<dbReference type="InterPro" id="IPR014729">
    <property type="entry name" value="Rossmann-like_a/b/a_fold"/>
</dbReference>
<dbReference type="InterPro" id="IPR009080">
    <property type="entry name" value="tRNAsynth_Ia_anticodon-bd"/>
</dbReference>
<dbReference type="InterPro" id="IPR009008">
    <property type="entry name" value="Val/Leu/Ile-tRNA-synth_edit"/>
</dbReference>
<dbReference type="NCBIfam" id="TIGR00392">
    <property type="entry name" value="ileS"/>
    <property type="match status" value="1"/>
</dbReference>
<dbReference type="PANTHER" id="PTHR42780:SF1">
    <property type="entry name" value="ISOLEUCINE--TRNA LIGASE, CYTOPLASMIC"/>
    <property type="match status" value="1"/>
</dbReference>
<dbReference type="PANTHER" id="PTHR42780">
    <property type="entry name" value="SOLEUCYL-TRNA SYNTHETASE"/>
    <property type="match status" value="1"/>
</dbReference>
<dbReference type="Pfam" id="PF08264">
    <property type="entry name" value="Anticodon_1"/>
    <property type="match status" value="1"/>
</dbReference>
<dbReference type="Pfam" id="PF19302">
    <property type="entry name" value="DUF5915"/>
    <property type="match status" value="1"/>
</dbReference>
<dbReference type="Pfam" id="PF00133">
    <property type="entry name" value="tRNA-synt_1"/>
    <property type="match status" value="1"/>
</dbReference>
<dbReference type="PRINTS" id="PR00984">
    <property type="entry name" value="TRNASYNTHILE"/>
</dbReference>
<dbReference type="SUPFAM" id="SSF47323">
    <property type="entry name" value="Anticodon-binding domain of a subclass of class I aminoacyl-tRNA synthetases"/>
    <property type="match status" value="2"/>
</dbReference>
<dbReference type="SUPFAM" id="SSF52374">
    <property type="entry name" value="Nucleotidylyl transferase"/>
    <property type="match status" value="1"/>
</dbReference>
<dbReference type="SUPFAM" id="SSF50677">
    <property type="entry name" value="ValRS/IleRS/LeuRS editing domain"/>
    <property type="match status" value="1"/>
</dbReference>
<name>SYI_NATPD</name>
<sequence>MSRFAEVDDQYDPDAVEDRVFDYWDEVDAYERTVEHRADGEDFFFVDGPPYTSGSAHMGTTWNKTLKDAYIRYHRMRGYNVTDRPGYDMHGLPIETKVEERLGFDNKKDIEEFGEQNFIDECKSFAEEQLEGLQEDFKSFGVWMDWDDPYKTVDPEYMEAAWWGFSKAHDRDLVEQGQRSISQCPRCETAIANNEVEYDHVEDPSIYVKFPLAEREGHLVIWTTTPWTVPANTFVAVDEEMTYQAIEVDTGDGTETLYVGEPCVEDVVDHGGYEDYEVVGEHEGSDLVGWRYEHPLREEVPEAPAFEGALEVYGADYVEADRTGLVHSAPGHGEVDFERGQELGLSVFCPVGPDGVYEDAAGDYAGQFVKDADAAIMDDLEAKGLLLSRGTVNHDYGHCWRCDTPIIQMVTDQWFITVTDIKDELLANMEESEWFPQEARDNRFRSFIEESPDWNVSRQRYWGIPIPIWTPDDWSGDVEEAIVVSTREELAERVDQDIDPESVDLHKDTVDDLTITADGTTYTRVPDVFDVWLDSSVASWGTLGYPGNEDDFEELWPADLIMEAHDQTRGWFWSQLGMGSAALGEAPYETVLMHGWALAEDGRKMSKSIGNIVAPQEAIDRHGADPMRLFLLTQNPQGDDMRFSWDEMENRQRDLNILWNVFRFPLPYMRLDDFDPDAVALDEAALETVDEWVLSRLSTVTAEMTDHWENFRQDKALDELLAFIVEDVSRFYIQVVRERMWEEETSESKLAAYATLHHVLVETTKLLAPYAPFVAEEIYGTLTGDGGHETVHMADWPDPDERFRDPQLETDVDIVAAVEEAGSNARQQAERKLRWPVTRVVVAADDDRAAEAVDRHRDLLRDRLNAREIELVEPGSDWEELSYTARADMSVLGPTFGDEAGEVMNAINAVSVTDTAVEALEAAVETELGRDIELTDEMVSFNTETPEGVEGTAFTVDGDDRGVVYVDTALTEDIESEGYAREVIRRVQEMRKDLDLDIEAEIRVDLDIADERVATLVDEHEGLIADEVRAAEFADLNAGHERVWDVESTDITITIDPVSER</sequence>
<reference key="1">
    <citation type="journal article" date="2005" name="Genome Res.">
        <title>Living with two extremes: conclusions from the genome sequence of Natronomonas pharaonis.</title>
        <authorList>
            <person name="Falb M."/>
            <person name="Pfeiffer F."/>
            <person name="Palm P."/>
            <person name="Rodewald K."/>
            <person name="Hickmann V."/>
            <person name="Tittor J."/>
            <person name="Oesterhelt D."/>
        </authorList>
    </citation>
    <scope>NUCLEOTIDE SEQUENCE [LARGE SCALE GENOMIC DNA]</scope>
    <source>
        <strain>ATCC 35678 / DSM 2160 / CIP 103997 / JCM 8858 / NBRC 14720 / NCIMB 2260 / Gabara</strain>
    </source>
</reference>
<comment type="function">
    <text evidence="1">Catalyzes the attachment of isoleucine to tRNA(Ile). As IleRS can inadvertently accommodate and process structurally similar amino acids such as valine, to avoid such errors it has two additional distinct tRNA(Ile)-dependent editing activities. One activity is designated as 'pretransfer' editing and involves the hydrolysis of activated Val-AMP. The other activity is designated 'posttransfer' editing and involves deacylation of mischarged Val-tRNA(Ile).</text>
</comment>
<comment type="catalytic activity">
    <reaction evidence="1">
        <text>tRNA(Ile) + L-isoleucine + ATP = L-isoleucyl-tRNA(Ile) + AMP + diphosphate</text>
        <dbReference type="Rhea" id="RHEA:11060"/>
        <dbReference type="Rhea" id="RHEA-COMP:9666"/>
        <dbReference type="Rhea" id="RHEA-COMP:9695"/>
        <dbReference type="ChEBI" id="CHEBI:30616"/>
        <dbReference type="ChEBI" id="CHEBI:33019"/>
        <dbReference type="ChEBI" id="CHEBI:58045"/>
        <dbReference type="ChEBI" id="CHEBI:78442"/>
        <dbReference type="ChEBI" id="CHEBI:78528"/>
        <dbReference type="ChEBI" id="CHEBI:456215"/>
        <dbReference type="EC" id="6.1.1.5"/>
    </reaction>
</comment>
<comment type="cofactor">
    <cofactor evidence="1">
        <name>Zn(2+)</name>
        <dbReference type="ChEBI" id="CHEBI:29105"/>
    </cofactor>
</comment>
<comment type="subunit">
    <text evidence="1">Monomer.</text>
</comment>
<comment type="subcellular location">
    <subcellularLocation>
        <location evidence="1">Cytoplasm</location>
    </subcellularLocation>
</comment>
<comment type="domain">
    <text evidence="1">IleRS has two distinct active sites: one for aminoacylation and one for editing. The misactivated valine is translocated from the active site to the editing site, which sterically excludes the correctly activated isoleucine. The single editing site contains two valyl binding pockets, one specific for each substrate (Val-AMP or Val-tRNA(Ile)).</text>
</comment>
<comment type="similarity">
    <text evidence="1">Belongs to the class-I aminoacyl-tRNA synthetase family. IleS type 2 subfamily.</text>
</comment>
<feature type="chain" id="PRO_0000098585" description="Isoleucine--tRNA ligase">
    <location>
        <begin position="1"/>
        <end position="1061"/>
    </location>
</feature>
<feature type="short sequence motif" description="'HIGH' region">
    <location>
        <begin position="50"/>
        <end position="60"/>
    </location>
</feature>
<feature type="short sequence motif" description="'KMSKS' region">
    <location>
        <begin position="604"/>
        <end position="608"/>
    </location>
</feature>
<feature type="binding site" evidence="1">
    <location>
        <position position="607"/>
    </location>
    <ligand>
        <name>ATP</name>
        <dbReference type="ChEBI" id="CHEBI:30616"/>
    </ligand>
</feature>
<accession>Q3ITY7</accession>
<evidence type="ECO:0000255" key="1">
    <source>
        <dbReference type="HAMAP-Rule" id="MF_02003"/>
    </source>
</evidence>
<proteinExistence type="inferred from homology"/>
<keyword id="KW-0030">Aminoacyl-tRNA synthetase</keyword>
<keyword id="KW-0067">ATP-binding</keyword>
<keyword id="KW-0963">Cytoplasm</keyword>
<keyword id="KW-0436">Ligase</keyword>
<keyword id="KW-0479">Metal-binding</keyword>
<keyword id="KW-0547">Nucleotide-binding</keyword>
<keyword id="KW-0648">Protein biosynthesis</keyword>
<keyword id="KW-1185">Reference proteome</keyword>
<keyword id="KW-0862">Zinc</keyword>